<comment type="function">
    <text evidence="1">Succinyl-CoA synthetase functions in the citric acid cycle (TCA), coupling the hydrolysis of succinyl-CoA to the synthesis of either ATP or GTP and thus represents the only step of substrate-level phosphorylation in the TCA. The beta subunit provides nucleotide specificity of the enzyme and binds the substrate succinate, while the binding sites for coenzyme A and phosphate are found in the alpha subunit.</text>
</comment>
<comment type="catalytic activity">
    <reaction evidence="1">
        <text>succinate + ATP + CoA = succinyl-CoA + ADP + phosphate</text>
        <dbReference type="Rhea" id="RHEA:17661"/>
        <dbReference type="ChEBI" id="CHEBI:30031"/>
        <dbReference type="ChEBI" id="CHEBI:30616"/>
        <dbReference type="ChEBI" id="CHEBI:43474"/>
        <dbReference type="ChEBI" id="CHEBI:57287"/>
        <dbReference type="ChEBI" id="CHEBI:57292"/>
        <dbReference type="ChEBI" id="CHEBI:456216"/>
        <dbReference type="EC" id="6.2.1.5"/>
    </reaction>
    <physiologicalReaction direction="right-to-left" evidence="1">
        <dbReference type="Rhea" id="RHEA:17663"/>
    </physiologicalReaction>
</comment>
<comment type="catalytic activity">
    <reaction evidence="1">
        <text>GTP + succinate + CoA = succinyl-CoA + GDP + phosphate</text>
        <dbReference type="Rhea" id="RHEA:22120"/>
        <dbReference type="ChEBI" id="CHEBI:30031"/>
        <dbReference type="ChEBI" id="CHEBI:37565"/>
        <dbReference type="ChEBI" id="CHEBI:43474"/>
        <dbReference type="ChEBI" id="CHEBI:57287"/>
        <dbReference type="ChEBI" id="CHEBI:57292"/>
        <dbReference type="ChEBI" id="CHEBI:58189"/>
    </reaction>
    <physiologicalReaction direction="right-to-left" evidence="1">
        <dbReference type="Rhea" id="RHEA:22122"/>
    </physiologicalReaction>
</comment>
<comment type="cofactor">
    <cofactor evidence="1">
        <name>Mg(2+)</name>
        <dbReference type="ChEBI" id="CHEBI:18420"/>
    </cofactor>
    <text evidence="1">Binds 1 Mg(2+) ion per subunit.</text>
</comment>
<comment type="pathway">
    <text evidence="1">Carbohydrate metabolism; tricarboxylic acid cycle; succinate from succinyl-CoA (ligase route): step 1/1.</text>
</comment>
<comment type="subunit">
    <text evidence="1">Heterotetramer of two alpha and two beta subunits.</text>
</comment>
<comment type="similarity">
    <text evidence="1">Belongs to the succinate/malate CoA ligase beta subunit family.</text>
</comment>
<organism>
    <name type="scientific">Salmonella paratyphi A (strain ATCC 9150 / SARB42)</name>
    <dbReference type="NCBI Taxonomy" id="295319"/>
    <lineage>
        <taxon>Bacteria</taxon>
        <taxon>Pseudomonadati</taxon>
        <taxon>Pseudomonadota</taxon>
        <taxon>Gammaproteobacteria</taxon>
        <taxon>Enterobacterales</taxon>
        <taxon>Enterobacteriaceae</taxon>
        <taxon>Salmonella</taxon>
    </lineage>
</organism>
<gene>
    <name evidence="1" type="primary">sucC</name>
    <name type="ordered locus">SPA2005</name>
</gene>
<name>SUCC_SALPA</name>
<accession>Q5PCM7</accession>
<reference key="1">
    <citation type="journal article" date="2004" name="Nat. Genet.">
        <title>Comparison of genome degradation in Paratyphi A and Typhi, human-restricted serovars of Salmonella enterica that cause typhoid.</title>
        <authorList>
            <person name="McClelland M."/>
            <person name="Sanderson K.E."/>
            <person name="Clifton S.W."/>
            <person name="Latreille P."/>
            <person name="Porwollik S."/>
            <person name="Sabo A."/>
            <person name="Meyer R."/>
            <person name="Bieri T."/>
            <person name="Ozersky P."/>
            <person name="McLellan M."/>
            <person name="Harkins C.R."/>
            <person name="Wang C."/>
            <person name="Nguyen C."/>
            <person name="Berghoff A."/>
            <person name="Elliott G."/>
            <person name="Kohlberg S."/>
            <person name="Strong C."/>
            <person name="Du F."/>
            <person name="Carter J."/>
            <person name="Kremizki C."/>
            <person name="Layman D."/>
            <person name="Leonard S."/>
            <person name="Sun H."/>
            <person name="Fulton L."/>
            <person name="Nash W."/>
            <person name="Miner T."/>
            <person name="Minx P."/>
            <person name="Delehaunty K."/>
            <person name="Fronick C."/>
            <person name="Magrini V."/>
            <person name="Nhan M."/>
            <person name="Warren W."/>
            <person name="Florea L."/>
            <person name="Spieth J."/>
            <person name="Wilson R.K."/>
        </authorList>
    </citation>
    <scope>NUCLEOTIDE SEQUENCE [LARGE SCALE GENOMIC DNA]</scope>
    <source>
        <strain>ATCC 9150 / SARB42</strain>
    </source>
</reference>
<feature type="chain" id="PRO_0000102854" description="Succinate--CoA ligase [ADP-forming] subunit beta">
    <location>
        <begin position="1"/>
        <end position="388"/>
    </location>
</feature>
<feature type="domain" description="ATP-grasp" evidence="1">
    <location>
        <begin position="9"/>
        <end position="244"/>
    </location>
</feature>
<feature type="binding site" evidence="1">
    <location>
        <position position="46"/>
    </location>
    <ligand>
        <name>ATP</name>
        <dbReference type="ChEBI" id="CHEBI:30616"/>
    </ligand>
</feature>
<feature type="binding site" evidence="1">
    <location>
        <begin position="53"/>
        <end position="55"/>
    </location>
    <ligand>
        <name>ATP</name>
        <dbReference type="ChEBI" id="CHEBI:30616"/>
    </ligand>
</feature>
<feature type="binding site" evidence="1">
    <location>
        <position position="99"/>
    </location>
    <ligand>
        <name>ATP</name>
        <dbReference type="ChEBI" id="CHEBI:30616"/>
    </ligand>
</feature>
<feature type="binding site" evidence="1">
    <location>
        <position position="102"/>
    </location>
    <ligand>
        <name>ATP</name>
        <dbReference type="ChEBI" id="CHEBI:30616"/>
    </ligand>
</feature>
<feature type="binding site" evidence="1">
    <location>
        <position position="107"/>
    </location>
    <ligand>
        <name>ATP</name>
        <dbReference type="ChEBI" id="CHEBI:30616"/>
    </ligand>
</feature>
<feature type="binding site" evidence="1">
    <location>
        <position position="199"/>
    </location>
    <ligand>
        <name>Mg(2+)</name>
        <dbReference type="ChEBI" id="CHEBI:18420"/>
    </ligand>
</feature>
<feature type="binding site" evidence="1">
    <location>
        <position position="213"/>
    </location>
    <ligand>
        <name>Mg(2+)</name>
        <dbReference type="ChEBI" id="CHEBI:18420"/>
    </ligand>
</feature>
<feature type="binding site" evidence="1">
    <location>
        <position position="264"/>
    </location>
    <ligand>
        <name>substrate</name>
        <note>ligand shared with subunit alpha</note>
    </ligand>
</feature>
<feature type="binding site" evidence="1">
    <location>
        <begin position="321"/>
        <end position="323"/>
    </location>
    <ligand>
        <name>substrate</name>
        <note>ligand shared with subunit alpha</note>
    </ligand>
</feature>
<proteinExistence type="inferred from homology"/>
<dbReference type="EC" id="6.2.1.5" evidence="1"/>
<dbReference type="EMBL" id="CP000026">
    <property type="protein sequence ID" value="AAV77908.1"/>
    <property type="molecule type" value="Genomic_DNA"/>
</dbReference>
<dbReference type="RefSeq" id="WP_001048590.1">
    <property type="nucleotide sequence ID" value="NC_006511.1"/>
</dbReference>
<dbReference type="SMR" id="Q5PCM7"/>
<dbReference type="KEGG" id="spt:SPA2005"/>
<dbReference type="HOGENOM" id="CLU_037430_4_0_6"/>
<dbReference type="UniPathway" id="UPA00223">
    <property type="reaction ID" value="UER00999"/>
</dbReference>
<dbReference type="Proteomes" id="UP000008185">
    <property type="component" value="Chromosome"/>
</dbReference>
<dbReference type="GO" id="GO:0005829">
    <property type="term" value="C:cytosol"/>
    <property type="evidence" value="ECO:0007669"/>
    <property type="project" value="TreeGrafter"/>
</dbReference>
<dbReference type="GO" id="GO:0042709">
    <property type="term" value="C:succinate-CoA ligase complex"/>
    <property type="evidence" value="ECO:0007669"/>
    <property type="project" value="TreeGrafter"/>
</dbReference>
<dbReference type="GO" id="GO:0005524">
    <property type="term" value="F:ATP binding"/>
    <property type="evidence" value="ECO:0007669"/>
    <property type="project" value="UniProtKB-UniRule"/>
</dbReference>
<dbReference type="GO" id="GO:0000287">
    <property type="term" value="F:magnesium ion binding"/>
    <property type="evidence" value="ECO:0007669"/>
    <property type="project" value="UniProtKB-UniRule"/>
</dbReference>
<dbReference type="GO" id="GO:0004775">
    <property type="term" value="F:succinate-CoA ligase (ADP-forming) activity"/>
    <property type="evidence" value="ECO:0007669"/>
    <property type="project" value="UniProtKB-UniRule"/>
</dbReference>
<dbReference type="GO" id="GO:0004776">
    <property type="term" value="F:succinate-CoA ligase (GDP-forming) activity"/>
    <property type="evidence" value="ECO:0007669"/>
    <property type="project" value="RHEA"/>
</dbReference>
<dbReference type="GO" id="GO:0006104">
    <property type="term" value="P:succinyl-CoA metabolic process"/>
    <property type="evidence" value="ECO:0007669"/>
    <property type="project" value="TreeGrafter"/>
</dbReference>
<dbReference type="GO" id="GO:0006099">
    <property type="term" value="P:tricarboxylic acid cycle"/>
    <property type="evidence" value="ECO:0007669"/>
    <property type="project" value="UniProtKB-UniRule"/>
</dbReference>
<dbReference type="FunFam" id="3.30.1490.20:FF:000002">
    <property type="entry name" value="Succinate--CoA ligase [ADP-forming] subunit beta"/>
    <property type="match status" value="1"/>
</dbReference>
<dbReference type="FunFam" id="3.30.470.20:FF:000002">
    <property type="entry name" value="Succinate--CoA ligase [ADP-forming] subunit beta"/>
    <property type="match status" value="1"/>
</dbReference>
<dbReference type="FunFam" id="3.40.50.261:FF:000001">
    <property type="entry name" value="Succinate--CoA ligase [ADP-forming] subunit beta"/>
    <property type="match status" value="1"/>
</dbReference>
<dbReference type="Gene3D" id="3.30.1490.20">
    <property type="entry name" value="ATP-grasp fold, A domain"/>
    <property type="match status" value="1"/>
</dbReference>
<dbReference type="Gene3D" id="3.30.470.20">
    <property type="entry name" value="ATP-grasp fold, B domain"/>
    <property type="match status" value="1"/>
</dbReference>
<dbReference type="Gene3D" id="3.40.50.261">
    <property type="entry name" value="Succinyl-CoA synthetase domains"/>
    <property type="match status" value="1"/>
</dbReference>
<dbReference type="HAMAP" id="MF_00558">
    <property type="entry name" value="Succ_CoA_beta"/>
    <property type="match status" value="1"/>
</dbReference>
<dbReference type="InterPro" id="IPR011761">
    <property type="entry name" value="ATP-grasp"/>
</dbReference>
<dbReference type="InterPro" id="IPR013650">
    <property type="entry name" value="ATP-grasp_succ-CoA_synth-type"/>
</dbReference>
<dbReference type="InterPro" id="IPR013815">
    <property type="entry name" value="ATP_grasp_subdomain_1"/>
</dbReference>
<dbReference type="InterPro" id="IPR017866">
    <property type="entry name" value="Succ-CoA_synthase_bsu_CS"/>
</dbReference>
<dbReference type="InterPro" id="IPR005811">
    <property type="entry name" value="SUCC_ACL_C"/>
</dbReference>
<dbReference type="InterPro" id="IPR005809">
    <property type="entry name" value="Succ_CoA_ligase-like_bsu"/>
</dbReference>
<dbReference type="InterPro" id="IPR016102">
    <property type="entry name" value="Succinyl-CoA_synth-like"/>
</dbReference>
<dbReference type="NCBIfam" id="NF001913">
    <property type="entry name" value="PRK00696.1"/>
    <property type="match status" value="1"/>
</dbReference>
<dbReference type="NCBIfam" id="TIGR01016">
    <property type="entry name" value="sucCoAbeta"/>
    <property type="match status" value="1"/>
</dbReference>
<dbReference type="PANTHER" id="PTHR11815:SF10">
    <property type="entry name" value="SUCCINATE--COA LIGASE [GDP-FORMING] SUBUNIT BETA, MITOCHONDRIAL"/>
    <property type="match status" value="1"/>
</dbReference>
<dbReference type="PANTHER" id="PTHR11815">
    <property type="entry name" value="SUCCINYL-COA SYNTHETASE BETA CHAIN"/>
    <property type="match status" value="1"/>
</dbReference>
<dbReference type="Pfam" id="PF08442">
    <property type="entry name" value="ATP-grasp_2"/>
    <property type="match status" value="1"/>
</dbReference>
<dbReference type="Pfam" id="PF00549">
    <property type="entry name" value="Ligase_CoA"/>
    <property type="match status" value="1"/>
</dbReference>
<dbReference type="PIRSF" id="PIRSF001554">
    <property type="entry name" value="SucCS_beta"/>
    <property type="match status" value="1"/>
</dbReference>
<dbReference type="SUPFAM" id="SSF56059">
    <property type="entry name" value="Glutathione synthetase ATP-binding domain-like"/>
    <property type="match status" value="1"/>
</dbReference>
<dbReference type="SUPFAM" id="SSF52210">
    <property type="entry name" value="Succinyl-CoA synthetase domains"/>
    <property type="match status" value="1"/>
</dbReference>
<dbReference type="PROSITE" id="PS50975">
    <property type="entry name" value="ATP_GRASP"/>
    <property type="match status" value="1"/>
</dbReference>
<dbReference type="PROSITE" id="PS01217">
    <property type="entry name" value="SUCCINYL_COA_LIG_3"/>
    <property type="match status" value="1"/>
</dbReference>
<keyword id="KW-0067">ATP-binding</keyword>
<keyword id="KW-0436">Ligase</keyword>
<keyword id="KW-0460">Magnesium</keyword>
<keyword id="KW-0479">Metal-binding</keyword>
<keyword id="KW-0547">Nucleotide-binding</keyword>
<keyword id="KW-0816">Tricarboxylic acid cycle</keyword>
<protein>
    <recommendedName>
        <fullName evidence="1">Succinate--CoA ligase [ADP-forming] subunit beta</fullName>
        <ecNumber evidence="1">6.2.1.5</ecNumber>
    </recommendedName>
    <alternativeName>
        <fullName evidence="1">Succinyl-CoA synthetase subunit beta</fullName>
        <shortName evidence="1">SCS-beta</shortName>
    </alternativeName>
</protein>
<sequence>MNLHEYQAKQLFARYGLPAPVGYACTTPREAEEAASKIGAGPWVVKCQVHAGGRGKAGGVKVVKSKEEIRAFAENWLGKRLVTYQTDANGQPVNQILVEAATDIGKELYLGAVVDRSSRRVVFMASTEGGVEIEKVAEETPHLIHKVALDPLTGPMPYQGRELAFKLGLEGKLVQQFTKIFMGLATIFLERDLALIEINPLVITKQGDLICLDGKLGADGNALFRQPDLREMRDQSQEDPREAQAAQWELNYVALDGNIGCMVNGAGLAMGTMDIVKLHGGEPANFLDVGGGATKERVTEAFKIILSDDNVKAVLVNIFGGIVRCDLIADGIIGAVEEVGVNVPVVVRLEGNNAELGAKKLADSGLNIIAAKSLTDAAQQVVAAVEGK</sequence>
<evidence type="ECO:0000255" key="1">
    <source>
        <dbReference type="HAMAP-Rule" id="MF_00558"/>
    </source>
</evidence>